<gene>
    <name type="primary">pknB</name>
    <name type="ordered locus">LL1887</name>
    <name type="ORF">L138452</name>
</gene>
<organism>
    <name type="scientific">Lactococcus lactis subsp. lactis (strain IL1403)</name>
    <name type="common">Streptococcus lactis</name>
    <dbReference type="NCBI Taxonomy" id="272623"/>
    <lineage>
        <taxon>Bacteria</taxon>
        <taxon>Bacillati</taxon>
        <taxon>Bacillota</taxon>
        <taxon>Bacilli</taxon>
        <taxon>Lactobacillales</taxon>
        <taxon>Streptococcaceae</taxon>
        <taxon>Lactococcus</taxon>
    </lineage>
</organism>
<reference key="1">
    <citation type="journal article" date="2001" name="Genome Res.">
        <title>The complete genome sequence of the lactic acid bacterium Lactococcus lactis ssp. lactis IL1403.</title>
        <authorList>
            <person name="Bolotin A."/>
            <person name="Wincker P."/>
            <person name="Mauger S."/>
            <person name="Jaillon O."/>
            <person name="Malarme K."/>
            <person name="Weissenbach J."/>
            <person name="Ehrlich S.D."/>
            <person name="Sorokin A."/>
        </authorList>
    </citation>
    <scope>NUCLEOTIDE SEQUENCE [LARGE SCALE GENOMIC DNA]</scope>
    <source>
        <strain>IL1403</strain>
    </source>
</reference>
<proteinExistence type="inferred from homology"/>
<feature type="chain" id="PRO_0000171200" description="Probable serine/threonine-protein kinase PknB">
    <location>
        <begin position="1"/>
        <end position="627"/>
    </location>
</feature>
<feature type="domain" description="Protein kinase" evidence="1">
    <location>
        <begin position="12"/>
        <end position="275"/>
    </location>
</feature>
<feature type="domain" description="PASTA 1" evidence="2">
    <location>
        <begin position="361"/>
        <end position="428"/>
    </location>
</feature>
<feature type="domain" description="PASTA 2" evidence="2">
    <location>
        <begin position="430"/>
        <end position="502"/>
    </location>
</feature>
<feature type="domain" description="PASTA 3" evidence="2">
    <location>
        <begin position="503"/>
        <end position="574"/>
    </location>
</feature>
<feature type="region of interest" description="Disordered" evidence="4">
    <location>
        <begin position="304"/>
        <end position="331"/>
    </location>
</feature>
<feature type="region of interest" description="Disordered" evidence="4">
    <location>
        <begin position="464"/>
        <end position="490"/>
    </location>
</feature>
<feature type="region of interest" description="Disordered" evidence="4">
    <location>
        <begin position="577"/>
        <end position="627"/>
    </location>
</feature>
<feature type="compositionally biased region" description="Basic and acidic residues" evidence="4">
    <location>
        <begin position="307"/>
        <end position="324"/>
    </location>
</feature>
<feature type="compositionally biased region" description="Low complexity" evidence="4">
    <location>
        <begin position="579"/>
        <end position="627"/>
    </location>
</feature>
<feature type="active site" description="Proton acceptor" evidence="1 3">
    <location>
        <position position="136"/>
    </location>
</feature>
<feature type="binding site" evidence="1">
    <location>
        <begin position="18"/>
        <end position="26"/>
    </location>
    <ligand>
        <name>ATP</name>
        <dbReference type="ChEBI" id="CHEBI:30616"/>
    </ligand>
</feature>
<feature type="binding site" evidence="1">
    <location>
        <position position="42"/>
    </location>
    <ligand>
        <name>ATP</name>
        <dbReference type="ChEBI" id="CHEBI:30616"/>
    </ligand>
</feature>
<protein>
    <recommendedName>
        <fullName>Probable serine/threonine-protein kinase PknB</fullName>
        <ecNumber>2.7.11.1</ecNumber>
    </recommendedName>
</protein>
<accession>Q9CEF5</accession>
<comment type="catalytic activity">
    <reaction>
        <text>L-seryl-[protein] + ATP = O-phospho-L-seryl-[protein] + ADP + H(+)</text>
        <dbReference type="Rhea" id="RHEA:17989"/>
        <dbReference type="Rhea" id="RHEA-COMP:9863"/>
        <dbReference type="Rhea" id="RHEA-COMP:11604"/>
        <dbReference type="ChEBI" id="CHEBI:15378"/>
        <dbReference type="ChEBI" id="CHEBI:29999"/>
        <dbReference type="ChEBI" id="CHEBI:30616"/>
        <dbReference type="ChEBI" id="CHEBI:83421"/>
        <dbReference type="ChEBI" id="CHEBI:456216"/>
        <dbReference type="EC" id="2.7.11.1"/>
    </reaction>
</comment>
<comment type="catalytic activity">
    <reaction>
        <text>L-threonyl-[protein] + ATP = O-phospho-L-threonyl-[protein] + ADP + H(+)</text>
        <dbReference type="Rhea" id="RHEA:46608"/>
        <dbReference type="Rhea" id="RHEA-COMP:11060"/>
        <dbReference type="Rhea" id="RHEA-COMP:11605"/>
        <dbReference type="ChEBI" id="CHEBI:15378"/>
        <dbReference type="ChEBI" id="CHEBI:30013"/>
        <dbReference type="ChEBI" id="CHEBI:30616"/>
        <dbReference type="ChEBI" id="CHEBI:61977"/>
        <dbReference type="ChEBI" id="CHEBI:456216"/>
        <dbReference type="EC" id="2.7.11.1"/>
    </reaction>
</comment>
<comment type="similarity">
    <text evidence="1">Belongs to the protein kinase superfamily. Ser/Thr protein kinase family.</text>
</comment>
<name>PKNB_LACLA</name>
<evidence type="ECO:0000255" key="1">
    <source>
        <dbReference type="PROSITE-ProRule" id="PRU00159"/>
    </source>
</evidence>
<evidence type="ECO:0000255" key="2">
    <source>
        <dbReference type="PROSITE-ProRule" id="PRU00528"/>
    </source>
</evidence>
<evidence type="ECO:0000255" key="3">
    <source>
        <dbReference type="PROSITE-ProRule" id="PRU10027"/>
    </source>
</evidence>
<evidence type="ECO:0000256" key="4">
    <source>
        <dbReference type="SAM" id="MobiDB-lite"/>
    </source>
</evidence>
<keyword id="KW-0067">ATP-binding</keyword>
<keyword id="KW-0418">Kinase</keyword>
<keyword id="KW-0547">Nucleotide-binding</keyword>
<keyword id="KW-1185">Reference proteome</keyword>
<keyword id="KW-0677">Repeat</keyword>
<keyword id="KW-0723">Serine/threonine-protein kinase</keyword>
<keyword id="KW-0808">Transferase</keyword>
<dbReference type="EC" id="2.7.11.1"/>
<dbReference type="EMBL" id="AE005176">
    <property type="protein sequence ID" value="AAK05985.1"/>
    <property type="molecule type" value="Genomic_DNA"/>
</dbReference>
<dbReference type="PIR" id="G86860">
    <property type="entry name" value="G86860"/>
</dbReference>
<dbReference type="RefSeq" id="NP_268044.1">
    <property type="nucleotide sequence ID" value="NC_002662.1"/>
</dbReference>
<dbReference type="RefSeq" id="WP_003130801.1">
    <property type="nucleotide sequence ID" value="NC_002662.1"/>
</dbReference>
<dbReference type="SMR" id="Q9CEF5"/>
<dbReference type="PaxDb" id="272623-L138452"/>
<dbReference type="EnsemblBacteria" id="AAK05985">
    <property type="protein sequence ID" value="AAK05985"/>
    <property type="gene ID" value="L138452"/>
</dbReference>
<dbReference type="KEGG" id="lla:L138452"/>
<dbReference type="PATRIC" id="fig|272623.7.peg.2021"/>
<dbReference type="eggNOG" id="COG0515">
    <property type="taxonomic scope" value="Bacteria"/>
</dbReference>
<dbReference type="eggNOG" id="COG2815">
    <property type="taxonomic scope" value="Bacteria"/>
</dbReference>
<dbReference type="HOGENOM" id="CLU_000288_135_2_9"/>
<dbReference type="OrthoDB" id="9788659at2"/>
<dbReference type="Proteomes" id="UP000002196">
    <property type="component" value="Chromosome"/>
</dbReference>
<dbReference type="GO" id="GO:0005524">
    <property type="term" value="F:ATP binding"/>
    <property type="evidence" value="ECO:0007669"/>
    <property type="project" value="UniProtKB-KW"/>
</dbReference>
<dbReference type="GO" id="GO:0106310">
    <property type="term" value="F:protein serine kinase activity"/>
    <property type="evidence" value="ECO:0007669"/>
    <property type="project" value="RHEA"/>
</dbReference>
<dbReference type="GO" id="GO:0004674">
    <property type="term" value="F:protein serine/threonine kinase activity"/>
    <property type="evidence" value="ECO:0007669"/>
    <property type="project" value="UniProtKB-KW"/>
</dbReference>
<dbReference type="CDD" id="cd06577">
    <property type="entry name" value="PASTA_pknB"/>
    <property type="match status" value="3"/>
</dbReference>
<dbReference type="CDD" id="cd14014">
    <property type="entry name" value="STKc_PknB_like"/>
    <property type="match status" value="1"/>
</dbReference>
<dbReference type="FunFam" id="1.10.510.10:FF:000021">
    <property type="entry name" value="Serine/threonine protein kinase"/>
    <property type="match status" value="1"/>
</dbReference>
<dbReference type="FunFam" id="3.30.200.20:FF:000035">
    <property type="entry name" value="Serine/threonine protein kinase Stk1"/>
    <property type="match status" value="1"/>
</dbReference>
<dbReference type="Gene3D" id="3.30.10.20">
    <property type="match status" value="3"/>
</dbReference>
<dbReference type="Gene3D" id="3.30.200.20">
    <property type="entry name" value="Phosphorylase Kinase, domain 1"/>
    <property type="match status" value="1"/>
</dbReference>
<dbReference type="Gene3D" id="1.10.510.10">
    <property type="entry name" value="Transferase(Phosphotransferase) domain 1"/>
    <property type="match status" value="1"/>
</dbReference>
<dbReference type="InterPro" id="IPR011009">
    <property type="entry name" value="Kinase-like_dom_sf"/>
</dbReference>
<dbReference type="InterPro" id="IPR005543">
    <property type="entry name" value="PASTA_dom"/>
</dbReference>
<dbReference type="InterPro" id="IPR000719">
    <property type="entry name" value="Prot_kinase_dom"/>
</dbReference>
<dbReference type="InterPro" id="IPR017441">
    <property type="entry name" value="Protein_kinase_ATP_BS"/>
</dbReference>
<dbReference type="InterPro" id="IPR008271">
    <property type="entry name" value="Ser/Thr_kinase_AS"/>
</dbReference>
<dbReference type="NCBIfam" id="NF033483">
    <property type="entry name" value="PknB_PASTA_kin"/>
    <property type="match status" value="1"/>
</dbReference>
<dbReference type="PANTHER" id="PTHR43289">
    <property type="entry name" value="MITOGEN-ACTIVATED PROTEIN KINASE KINASE KINASE 20-RELATED"/>
    <property type="match status" value="1"/>
</dbReference>
<dbReference type="PANTHER" id="PTHR43289:SF34">
    <property type="entry name" value="SERINE_THREONINE-PROTEIN KINASE YBDM-RELATED"/>
    <property type="match status" value="1"/>
</dbReference>
<dbReference type="Pfam" id="PF03793">
    <property type="entry name" value="PASTA"/>
    <property type="match status" value="3"/>
</dbReference>
<dbReference type="Pfam" id="PF00069">
    <property type="entry name" value="Pkinase"/>
    <property type="match status" value="1"/>
</dbReference>
<dbReference type="SMART" id="SM00740">
    <property type="entry name" value="PASTA"/>
    <property type="match status" value="3"/>
</dbReference>
<dbReference type="SMART" id="SM00220">
    <property type="entry name" value="S_TKc"/>
    <property type="match status" value="1"/>
</dbReference>
<dbReference type="SUPFAM" id="SSF56112">
    <property type="entry name" value="Protein kinase-like (PK-like)"/>
    <property type="match status" value="1"/>
</dbReference>
<dbReference type="PROSITE" id="PS51178">
    <property type="entry name" value="PASTA"/>
    <property type="match status" value="3"/>
</dbReference>
<dbReference type="PROSITE" id="PS00107">
    <property type="entry name" value="PROTEIN_KINASE_ATP"/>
    <property type="match status" value="1"/>
</dbReference>
<dbReference type="PROSITE" id="PS50011">
    <property type="entry name" value="PROTEIN_KINASE_DOM"/>
    <property type="match status" value="1"/>
</dbReference>
<dbReference type="PROSITE" id="PS00108">
    <property type="entry name" value="PROTEIN_KINASE_ST"/>
    <property type="match status" value="1"/>
</dbReference>
<sequence>MIQIGKIFADRYRIIKEIGRGGMANVYQGEDTFLGDRLVAIKVLRSNFENDDIAIARFQREAFAMAELSHPNIVGISDVGEFESQQYIVMEFVDGMTLKQYINQNAPLANDEAIEIITEILSAMDMAHSHGIIHRDLKPQNVLVSSSGTVKVTDFGIAKALSETSLTQTNTMFGSVHYLSPEQARGSNATVQSDIYAIGIILFELLTGQIPFDGDSAVAIALKHFQESIPSIINLNPEVPQALENVVIKATAKDIKNRYTDVEEMMTDVATSTSLDRRGEEKLVFNKDHDETKIMPANLINPYDTKPLIDKKEDNDSQTDEKAASSEVGNKNKKSKKGLIIGLIILLLVVGGATLAWVVSTPTNVKIPNVTNSTLSQAKSKIKDAKLKVGTVHKQQSSTIAEGKVIKTDPTSGTTVRSNSSVDIYVSTGNEDIIKMKDFVGEKIDEAMATLLKDYGIDESQVTQTSVPSDSYPAGTIIKQSPKKGSSFDTKGSEKITFEVSSGKQVEVPDYKPNGQYMTYSQYQAALKAAGFTNITLDPQATTNQQADGYVYSVYPNVGTSVDPTQEIVVTYSVYTAPSSSSTTSESTTTSETSSSTTSSTSSSTTSQPSTDNNNSSKESSTTSSSS</sequence>